<organism>
    <name type="scientific">Lophura bulweri</name>
    <name type="common">Bulwer's pheasant</name>
    <dbReference type="NCBI Taxonomy" id="9042"/>
    <lineage>
        <taxon>Eukaryota</taxon>
        <taxon>Metazoa</taxon>
        <taxon>Chordata</taxon>
        <taxon>Craniata</taxon>
        <taxon>Vertebrata</taxon>
        <taxon>Euteleostomi</taxon>
        <taxon>Archelosauria</taxon>
        <taxon>Archosauria</taxon>
        <taxon>Dinosauria</taxon>
        <taxon>Saurischia</taxon>
        <taxon>Theropoda</taxon>
        <taxon>Coelurosauria</taxon>
        <taxon>Aves</taxon>
        <taxon>Neognathae</taxon>
        <taxon>Galloanserae</taxon>
        <taxon>Galliformes</taxon>
        <taxon>Phasianidae</taxon>
        <taxon>Phasianinae</taxon>
        <taxon>Lophura</taxon>
    </lineage>
</organism>
<sequence length="56" mass="6069">LAAVSVDCSEYPKPTCTMEYRPLCGSDNKTYGNKCNFCNAVVESNGTLTLSHFGKC</sequence>
<comment type="subcellular location">
    <subcellularLocation>
        <location>Secreted</location>
    </subcellularLocation>
</comment>
<comment type="domain">
    <text>Avian ovomucoid consists of three homologous, tandem Kazal family inhibitory domains.</text>
</comment>
<protein>
    <recommendedName>
        <fullName>Ovomucoid</fullName>
    </recommendedName>
</protein>
<keyword id="KW-0903">Direct protein sequencing</keyword>
<keyword id="KW-1015">Disulfide bond</keyword>
<keyword id="KW-0325">Glycoprotein</keyword>
<keyword id="KW-0646">Protease inhibitor</keyword>
<keyword id="KW-0677">Repeat</keyword>
<keyword id="KW-0964">Secreted</keyword>
<keyword id="KW-0722">Serine protease inhibitor</keyword>
<proteinExistence type="evidence at protein level"/>
<name>IOVO_LOPBU</name>
<feature type="chain" id="PRO_0000073130" description="Ovomucoid">
    <location>
        <begin position="1" status="less than"/>
        <end position="56" status="greater than"/>
    </location>
</feature>
<feature type="domain" description="Kazal-like" evidence="1">
    <location>
        <begin position="6"/>
        <end position="56"/>
    </location>
</feature>
<feature type="site" description="Reactive bond 3">
    <location>
        <begin position="18"/>
        <end position="19"/>
    </location>
</feature>
<feature type="glycosylation site" description="N-linked (GlcNAc...) asparagine">
    <location>
        <position position="45"/>
    </location>
</feature>
<feature type="disulfide bond">
    <location>
        <begin position="8"/>
        <end position="38"/>
    </location>
</feature>
<feature type="disulfide bond">
    <location>
        <begin position="16"/>
        <end position="35"/>
    </location>
</feature>
<feature type="disulfide bond">
    <location>
        <begin position="24"/>
        <end position="56"/>
    </location>
</feature>
<feature type="non-terminal residue">
    <location>
        <position position="1"/>
    </location>
</feature>
<feature type="non-terminal residue">
    <location>
        <position position="56"/>
    </location>
</feature>
<evidence type="ECO:0000255" key="1">
    <source>
        <dbReference type="PROSITE-ProRule" id="PRU00798"/>
    </source>
</evidence>
<dbReference type="PIR" id="C61493">
    <property type="entry name" value="C61493"/>
</dbReference>
<dbReference type="SMR" id="P52261"/>
<dbReference type="GO" id="GO:0005615">
    <property type="term" value="C:extracellular space"/>
    <property type="evidence" value="ECO:0007669"/>
    <property type="project" value="UniProtKB-ARBA"/>
</dbReference>
<dbReference type="GO" id="GO:0004867">
    <property type="term" value="F:serine-type endopeptidase inhibitor activity"/>
    <property type="evidence" value="ECO:0007669"/>
    <property type="project" value="UniProtKB-KW"/>
</dbReference>
<dbReference type="CDD" id="cd00104">
    <property type="entry name" value="KAZAL_FS"/>
    <property type="match status" value="1"/>
</dbReference>
<dbReference type="FunFam" id="3.30.60.30:FF:000037">
    <property type="entry name" value="Ovomucoid"/>
    <property type="match status" value="1"/>
</dbReference>
<dbReference type="Gene3D" id="3.30.60.30">
    <property type="match status" value="1"/>
</dbReference>
<dbReference type="InterPro" id="IPR051597">
    <property type="entry name" value="Bifunctional_prot_inhibitor"/>
</dbReference>
<dbReference type="InterPro" id="IPR002350">
    <property type="entry name" value="Kazal_dom"/>
</dbReference>
<dbReference type="InterPro" id="IPR036058">
    <property type="entry name" value="Kazal_dom_sf"/>
</dbReference>
<dbReference type="InterPro" id="IPR001239">
    <property type="entry name" value="Prot_inh_Kazal-m"/>
</dbReference>
<dbReference type="PANTHER" id="PTHR47729:SF1">
    <property type="entry name" value="OVOMUCOID-LIKE-RELATED"/>
    <property type="match status" value="1"/>
</dbReference>
<dbReference type="PANTHER" id="PTHR47729">
    <property type="entry name" value="SERINE PEPTIDASE INHIBITOR, KAZAL TYPE 2, TANDEM DUPLICATE 1-RELATED"/>
    <property type="match status" value="1"/>
</dbReference>
<dbReference type="Pfam" id="PF00050">
    <property type="entry name" value="Kazal_1"/>
    <property type="match status" value="1"/>
</dbReference>
<dbReference type="PRINTS" id="PR00290">
    <property type="entry name" value="KAZALINHBTR"/>
</dbReference>
<dbReference type="SMART" id="SM00280">
    <property type="entry name" value="KAZAL"/>
    <property type="match status" value="1"/>
</dbReference>
<dbReference type="SUPFAM" id="SSF100895">
    <property type="entry name" value="Kazal-type serine protease inhibitors"/>
    <property type="match status" value="1"/>
</dbReference>
<dbReference type="PROSITE" id="PS00282">
    <property type="entry name" value="KAZAL_1"/>
    <property type="match status" value="1"/>
</dbReference>
<dbReference type="PROSITE" id="PS51465">
    <property type="entry name" value="KAZAL_2"/>
    <property type="match status" value="1"/>
</dbReference>
<accession>P52261</accession>
<reference key="1">
    <citation type="journal article" date="1990" name="J. Protein Chem.">
        <title>Amino acid sequences of ovomucoid third domain from 25 additional species of birds.</title>
        <authorList>
            <person name="Laskowski M. Jr."/>
            <person name="Apostol I."/>
            <person name="Ardelt W."/>
            <person name="Cook J."/>
            <person name="Giletto A."/>
            <person name="Kelly C.A."/>
            <person name="Lu W."/>
            <person name="Park S.J."/>
            <person name="Qasim M.A."/>
            <person name="Whatley H.E."/>
            <person name="Wieczorek A."/>
            <person name="Wynn R."/>
        </authorList>
    </citation>
    <scope>PROTEIN SEQUENCE</scope>
</reference>